<keyword id="KW-1185">Reference proteome</keyword>
<keyword id="KW-0694">RNA-binding</keyword>
<keyword id="KW-0804">Transcription</keyword>
<keyword id="KW-0889">Transcription antitermination</keyword>
<keyword id="KW-0805">Transcription regulation</keyword>
<accession>B4SCZ7</accession>
<protein>
    <recommendedName>
        <fullName evidence="1">Transcription antitermination protein NusB</fullName>
    </recommendedName>
    <alternativeName>
        <fullName evidence="1">Antitermination factor NusB</fullName>
    </alternativeName>
</protein>
<reference key="1">
    <citation type="submission" date="2008-06" db="EMBL/GenBank/DDBJ databases">
        <title>Complete sequence of Pelodictyon phaeoclathratiforme BU-1.</title>
        <authorList>
            <consortium name="US DOE Joint Genome Institute"/>
            <person name="Lucas S."/>
            <person name="Copeland A."/>
            <person name="Lapidus A."/>
            <person name="Glavina del Rio T."/>
            <person name="Dalin E."/>
            <person name="Tice H."/>
            <person name="Bruce D."/>
            <person name="Goodwin L."/>
            <person name="Pitluck S."/>
            <person name="Schmutz J."/>
            <person name="Larimer F."/>
            <person name="Land M."/>
            <person name="Hauser L."/>
            <person name="Kyrpides N."/>
            <person name="Mikhailova N."/>
            <person name="Liu Z."/>
            <person name="Li T."/>
            <person name="Zhao F."/>
            <person name="Overmann J."/>
            <person name="Bryant D.A."/>
            <person name="Richardson P."/>
        </authorList>
    </citation>
    <scope>NUCLEOTIDE SEQUENCE [LARGE SCALE GENOMIC DNA]</scope>
    <source>
        <strain>DSM 5477 / BU-1</strain>
    </source>
</reference>
<dbReference type="EMBL" id="CP001110">
    <property type="protein sequence ID" value="ACF42831.1"/>
    <property type="molecule type" value="Genomic_DNA"/>
</dbReference>
<dbReference type="RefSeq" id="WP_012507326.1">
    <property type="nucleotide sequence ID" value="NC_011060.1"/>
</dbReference>
<dbReference type="SMR" id="B4SCZ7"/>
<dbReference type="STRING" id="324925.Ppha_0505"/>
<dbReference type="KEGG" id="pph:Ppha_0505"/>
<dbReference type="eggNOG" id="COG0781">
    <property type="taxonomic scope" value="Bacteria"/>
</dbReference>
<dbReference type="HOGENOM" id="CLU_087843_3_0_10"/>
<dbReference type="OrthoDB" id="9787568at2"/>
<dbReference type="Proteomes" id="UP000002724">
    <property type="component" value="Chromosome"/>
</dbReference>
<dbReference type="GO" id="GO:0005829">
    <property type="term" value="C:cytosol"/>
    <property type="evidence" value="ECO:0007669"/>
    <property type="project" value="TreeGrafter"/>
</dbReference>
<dbReference type="GO" id="GO:0003723">
    <property type="term" value="F:RNA binding"/>
    <property type="evidence" value="ECO:0007669"/>
    <property type="project" value="UniProtKB-UniRule"/>
</dbReference>
<dbReference type="GO" id="GO:0006353">
    <property type="term" value="P:DNA-templated transcription termination"/>
    <property type="evidence" value="ECO:0007669"/>
    <property type="project" value="UniProtKB-UniRule"/>
</dbReference>
<dbReference type="GO" id="GO:0031564">
    <property type="term" value="P:transcription antitermination"/>
    <property type="evidence" value="ECO:0007669"/>
    <property type="project" value="UniProtKB-KW"/>
</dbReference>
<dbReference type="CDD" id="cd00619">
    <property type="entry name" value="Terminator_NusB"/>
    <property type="match status" value="1"/>
</dbReference>
<dbReference type="Gene3D" id="1.10.940.10">
    <property type="entry name" value="NusB-like"/>
    <property type="match status" value="1"/>
</dbReference>
<dbReference type="HAMAP" id="MF_00073">
    <property type="entry name" value="NusB"/>
    <property type="match status" value="1"/>
</dbReference>
<dbReference type="InterPro" id="IPR035926">
    <property type="entry name" value="NusB-like_sf"/>
</dbReference>
<dbReference type="InterPro" id="IPR011605">
    <property type="entry name" value="NusB_fam"/>
</dbReference>
<dbReference type="InterPro" id="IPR006027">
    <property type="entry name" value="NusB_RsmB_TIM44"/>
</dbReference>
<dbReference type="NCBIfam" id="TIGR01951">
    <property type="entry name" value="nusB"/>
    <property type="match status" value="1"/>
</dbReference>
<dbReference type="PANTHER" id="PTHR11078:SF3">
    <property type="entry name" value="ANTITERMINATION NUSB DOMAIN-CONTAINING PROTEIN"/>
    <property type="match status" value="1"/>
</dbReference>
<dbReference type="PANTHER" id="PTHR11078">
    <property type="entry name" value="N UTILIZATION SUBSTANCE PROTEIN B-RELATED"/>
    <property type="match status" value="1"/>
</dbReference>
<dbReference type="Pfam" id="PF01029">
    <property type="entry name" value="NusB"/>
    <property type="match status" value="1"/>
</dbReference>
<dbReference type="SUPFAM" id="SSF48013">
    <property type="entry name" value="NusB-like"/>
    <property type="match status" value="1"/>
</dbReference>
<proteinExistence type="inferred from homology"/>
<gene>
    <name evidence="1" type="primary">nusB</name>
    <name type="ordered locus">Ppha_0505</name>
</gene>
<evidence type="ECO:0000255" key="1">
    <source>
        <dbReference type="HAMAP-Rule" id="MF_00073"/>
    </source>
</evidence>
<sequence length="171" mass="19703">MKTYRRQIREKILQALYTIEIRDTDIDSAAGWLLTEEILADPNAMKFFNMLLKNIKEHMEEIDRYIVKHTFNWDMSRIAIIDKNIIRMALTEILYCEDIPPKVSINEAIEIAKKFNSTDKSSKFVNGILDAIFNDLKNEGKVHKNGRGLIDQSVTKLQKVEGEGENPESAS</sequence>
<feature type="chain" id="PRO_1000092570" description="Transcription antitermination protein NusB">
    <location>
        <begin position="1"/>
        <end position="171"/>
    </location>
</feature>
<comment type="function">
    <text evidence="1">Involved in transcription antitermination. Required for transcription of ribosomal RNA (rRNA) genes. Binds specifically to the boxA antiterminator sequence of the ribosomal RNA (rrn) operons.</text>
</comment>
<comment type="similarity">
    <text evidence="1">Belongs to the NusB family.</text>
</comment>
<organism>
    <name type="scientific">Pelodictyon phaeoclathratiforme (strain DSM 5477 / BU-1)</name>
    <dbReference type="NCBI Taxonomy" id="324925"/>
    <lineage>
        <taxon>Bacteria</taxon>
        <taxon>Pseudomonadati</taxon>
        <taxon>Chlorobiota</taxon>
        <taxon>Chlorobiia</taxon>
        <taxon>Chlorobiales</taxon>
        <taxon>Chlorobiaceae</taxon>
        <taxon>Chlorobium/Pelodictyon group</taxon>
        <taxon>Pelodictyon</taxon>
    </lineage>
</organism>
<name>NUSB_PELPB</name>